<comment type="cofactor">
    <cofactor evidence="2">
        <name>[4Fe-4S] cluster</name>
        <dbReference type="ChEBI" id="CHEBI:49883"/>
    </cofactor>
    <text evidence="2">Binds 1 [4Fe-4S] cluster.</text>
</comment>
<comment type="similarity">
    <text evidence="2">Belongs to the complex I 20 kDa subunit family.</text>
</comment>
<feature type="chain" id="PRO_0000118784" description="Uncharacterized protein MJ1363">
    <location>
        <begin position="1"/>
        <end position="151"/>
    </location>
</feature>
<feature type="binding site" evidence="1">
    <location>
        <position position="24"/>
    </location>
    <ligand>
        <name>[4Fe-4S] cluster</name>
        <dbReference type="ChEBI" id="CHEBI:49883"/>
    </ligand>
</feature>
<feature type="binding site" evidence="1">
    <location>
        <position position="27"/>
    </location>
    <ligand>
        <name>[4Fe-4S] cluster</name>
        <dbReference type="ChEBI" id="CHEBI:49883"/>
    </ligand>
</feature>
<feature type="binding site" evidence="1">
    <location>
        <position position="92"/>
    </location>
    <ligand>
        <name>[4Fe-4S] cluster</name>
        <dbReference type="ChEBI" id="CHEBI:49883"/>
    </ligand>
</feature>
<feature type="binding site" evidence="1">
    <location>
        <position position="129"/>
    </location>
    <ligand>
        <name>[4Fe-4S] cluster</name>
        <dbReference type="ChEBI" id="CHEBI:49883"/>
    </ligand>
</feature>
<protein>
    <recommendedName>
        <fullName>Uncharacterized protein MJ1363</fullName>
    </recommendedName>
</protein>
<organism>
    <name type="scientific">Methanocaldococcus jannaschii (strain ATCC 43067 / DSM 2661 / JAL-1 / JCM 10045 / NBRC 100440)</name>
    <name type="common">Methanococcus jannaschii</name>
    <dbReference type="NCBI Taxonomy" id="243232"/>
    <lineage>
        <taxon>Archaea</taxon>
        <taxon>Methanobacteriati</taxon>
        <taxon>Methanobacteriota</taxon>
        <taxon>Methanomada group</taxon>
        <taxon>Methanococci</taxon>
        <taxon>Methanococcales</taxon>
        <taxon>Methanocaldococcaceae</taxon>
        <taxon>Methanocaldococcus</taxon>
    </lineage>
</organism>
<name>Y1363_METJA</name>
<dbReference type="EMBL" id="L77117">
    <property type="protein sequence ID" value="AAB99371.1"/>
    <property type="molecule type" value="Genomic_DNA"/>
</dbReference>
<dbReference type="PIR" id="B64470">
    <property type="entry name" value="B64470"/>
</dbReference>
<dbReference type="SMR" id="Q58758"/>
<dbReference type="FunCoup" id="Q58758">
    <property type="interactions" value="72"/>
</dbReference>
<dbReference type="STRING" id="243232.MJ_1363"/>
<dbReference type="PaxDb" id="243232-MJ_1363"/>
<dbReference type="EnsemblBacteria" id="AAB99371">
    <property type="protein sequence ID" value="AAB99371"/>
    <property type="gene ID" value="MJ_1363"/>
</dbReference>
<dbReference type="KEGG" id="mja:MJ_1363"/>
<dbReference type="eggNOG" id="arCOG01553">
    <property type="taxonomic scope" value="Archaea"/>
</dbReference>
<dbReference type="HOGENOM" id="CLU_055737_7_3_2"/>
<dbReference type="InParanoid" id="Q58758"/>
<dbReference type="PhylomeDB" id="Q58758"/>
<dbReference type="Proteomes" id="UP000000805">
    <property type="component" value="Chromosome"/>
</dbReference>
<dbReference type="GO" id="GO:0051539">
    <property type="term" value="F:4 iron, 4 sulfur cluster binding"/>
    <property type="evidence" value="ECO:0007669"/>
    <property type="project" value="UniProtKB-KW"/>
</dbReference>
<dbReference type="GO" id="GO:0046872">
    <property type="term" value="F:metal ion binding"/>
    <property type="evidence" value="ECO:0007669"/>
    <property type="project" value="UniProtKB-KW"/>
</dbReference>
<dbReference type="Gene3D" id="3.40.50.12280">
    <property type="match status" value="1"/>
</dbReference>
<dbReference type="InterPro" id="IPR052375">
    <property type="entry name" value="Complex_I_20kDa-like"/>
</dbReference>
<dbReference type="InterPro" id="IPR006137">
    <property type="entry name" value="NADH_UbQ_OxRdtase-like_20kDa"/>
</dbReference>
<dbReference type="PANTHER" id="PTHR42989:SF1">
    <property type="entry name" value="FORMATE HYDROGENLYASE SUBUNIT 7-RELATED"/>
    <property type="match status" value="1"/>
</dbReference>
<dbReference type="PANTHER" id="PTHR42989">
    <property type="entry name" value="HYDROGENASE-4 COMPONENT I"/>
    <property type="match status" value="1"/>
</dbReference>
<dbReference type="Pfam" id="PF01058">
    <property type="entry name" value="Oxidored_q6"/>
    <property type="match status" value="1"/>
</dbReference>
<dbReference type="SUPFAM" id="SSF56770">
    <property type="entry name" value="HydA/Nqo6-like"/>
    <property type="match status" value="1"/>
</dbReference>
<evidence type="ECO:0000255" key="1"/>
<evidence type="ECO:0000305" key="2"/>
<accession>Q58758</accession>
<reference key="1">
    <citation type="journal article" date="1996" name="Science">
        <title>Complete genome sequence of the methanogenic archaeon, Methanococcus jannaschii.</title>
        <authorList>
            <person name="Bult C.J."/>
            <person name="White O."/>
            <person name="Olsen G.J."/>
            <person name="Zhou L."/>
            <person name="Fleischmann R.D."/>
            <person name="Sutton G.G."/>
            <person name="Blake J.A."/>
            <person name="FitzGerald L.M."/>
            <person name="Clayton R.A."/>
            <person name="Gocayne J.D."/>
            <person name="Kerlavage A.R."/>
            <person name="Dougherty B.A."/>
            <person name="Tomb J.-F."/>
            <person name="Adams M.D."/>
            <person name="Reich C.I."/>
            <person name="Overbeek R."/>
            <person name="Kirkness E.F."/>
            <person name="Weinstock K.G."/>
            <person name="Merrick J.M."/>
            <person name="Glodek A."/>
            <person name="Scott J.L."/>
            <person name="Geoghagen N.S.M."/>
            <person name="Weidman J.F."/>
            <person name="Fuhrmann J.L."/>
            <person name="Nguyen D."/>
            <person name="Utterback T.R."/>
            <person name="Kelley J.M."/>
            <person name="Peterson J.D."/>
            <person name="Sadow P.W."/>
            <person name="Hanna M.C."/>
            <person name="Cotton M.D."/>
            <person name="Roberts K.M."/>
            <person name="Hurst M.A."/>
            <person name="Kaine B.P."/>
            <person name="Borodovsky M."/>
            <person name="Klenk H.-P."/>
            <person name="Fraser C.M."/>
            <person name="Smith H.O."/>
            <person name="Woese C.R."/>
            <person name="Venter J.C."/>
        </authorList>
    </citation>
    <scope>NUCLEOTIDE SEQUENCE [LARGE SCALE GENOMIC DNA]</scope>
    <source>
        <strain>ATCC 43067 / DSM 2661 / JAL-1 / JCM 10045 / NBRC 100440</strain>
    </source>
</reference>
<proteinExistence type="inferred from homology"/>
<keyword id="KW-0004">4Fe-4S</keyword>
<keyword id="KW-0408">Iron</keyword>
<keyword id="KW-0411">Iron-sulfur</keyword>
<keyword id="KW-0479">Metal-binding</keyword>
<keyword id="KW-1185">Reference proteome</keyword>
<sequence length="151" mass="16168">MTVMIKKIARKKCIHVMLVYTGGCNACDIEVVNAIFSPFYDAEQYNVFLTFNPREADILVVTGCVTKVVAESLRKIYEKIPEPKAVVAVGACALMGGVYKNIGGDLGTSDFVAGPVENIIPVDVKVPGCAPRPEDIIAGIVKALPKVIEGK</sequence>
<gene>
    <name type="ordered locus">MJ1363</name>
</gene>